<accession>Q8PRX4</accession>
<gene>
    <name type="primary">trpF2</name>
    <name type="ordered locus">MM_3314</name>
</gene>
<protein>
    <recommendedName>
        <fullName>N-(5'-phosphoribosyl)anthranilate isomerase 2</fullName>
        <shortName>PRAI 2</shortName>
        <ecNumber>5.3.1.24</ecNumber>
    </recommendedName>
</protein>
<feature type="chain" id="PRO_0000154406" description="N-(5'-phosphoribosyl)anthranilate isomerase 2">
    <location>
        <begin position="1"/>
        <end position="226"/>
    </location>
</feature>
<proteinExistence type="inferred from homology"/>
<organism>
    <name type="scientific">Methanosarcina mazei (strain ATCC BAA-159 / DSM 3647 / Goe1 / Go1 / JCM 11833 / OCM 88)</name>
    <name type="common">Methanosarcina frisia</name>
    <dbReference type="NCBI Taxonomy" id="192952"/>
    <lineage>
        <taxon>Archaea</taxon>
        <taxon>Methanobacteriati</taxon>
        <taxon>Methanobacteriota</taxon>
        <taxon>Stenosarchaea group</taxon>
        <taxon>Methanomicrobia</taxon>
        <taxon>Methanosarcinales</taxon>
        <taxon>Methanosarcinaceae</taxon>
        <taxon>Methanosarcina</taxon>
    </lineage>
</organism>
<keyword id="KW-0028">Amino-acid biosynthesis</keyword>
<keyword id="KW-0057">Aromatic amino acid biosynthesis</keyword>
<keyword id="KW-0413">Isomerase</keyword>
<keyword id="KW-0822">Tryptophan biosynthesis</keyword>
<comment type="catalytic activity">
    <reaction>
        <text>N-(5-phospho-beta-D-ribosyl)anthranilate = 1-(2-carboxyphenylamino)-1-deoxy-D-ribulose 5-phosphate</text>
        <dbReference type="Rhea" id="RHEA:21540"/>
        <dbReference type="ChEBI" id="CHEBI:18277"/>
        <dbReference type="ChEBI" id="CHEBI:58613"/>
        <dbReference type="EC" id="5.3.1.24"/>
    </reaction>
</comment>
<comment type="pathway">
    <text>Amino-acid biosynthesis; L-tryptophan biosynthesis; L-tryptophan from chorismate: step 3/5.</text>
</comment>
<comment type="similarity">
    <text evidence="1">Belongs to the TrpF family.</text>
</comment>
<comment type="sequence caution" evidence="1">
    <conflict type="erroneous initiation">
        <sequence resource="EMBL-CDS" id="AAM33010"/>
    </conflict>
</comment>
<evidence type="ECO:0000305" key="1"/>
<name>TRPF2_METMA</name>
<reference key="1">
    <citation type="journal article" date="2002" name="J. Mol. Microbiol. Biotechnol.">
        <title>The genome of Methanosarcina mazei: evidence for lateral gene transfer between Bacteria and Archaea.</title>
        <authorList>
            <person name="Deppenmeier U."/>
            <person name="Johann A."/>
            <person name="Hartsch T."/>
            <person name="Merkl R."/>
            <person name="Schmitz R.A."/>
            <person name="Martinez-Arias R."/>
            <person name="Henne A."/>
            <person name="Wiezer A."/>
            <person name="Baeumer S."/>
            <person name="Jacobi C."/>
            <person name="Brueggemann H."/>
            <person name="Lienard T."/>
            <person name="Christmann A."/>
            <person name="Boemecke M."/>
            <person name="Steckel S."/>
            <person name="Bhattacharyya A."/>
            <person name="Lykidis A."/>
            <person name="Overbeek R."/>
            <person name="Klenk H.-P."/>
            <person name="Gunsalus R.P."/>
            <person name="Fritz H.-J."/>
            <person name="Gottschalk G."/>
        </authorList>
    </citation>
    <scope>NUCLEOTIDE SEQUENCE [LARGE SCALE GENOMIC DNA]</scope>
    <source>
        <strain>ATCC BAA-159 / DSM 3647 / Goe1 / Go1 / JCM 11833 / OCM 88</strain>
    </source>
</reference>
<dbReference type="EC" id="5.3.1.24"/>
<dbReference type="EMBL" id="AE008384">
    <property type="protein sequence ID" value="AAM33010.1"/>
    <property type="status" value="ALT_INIT"/>
    <property type="molecule type" value="Genomic_DNA"/>
</dbReference>
<dbReference type="SMR" id="Q8PRX4"/>
<dbReference type="DNASU" id="1481656"/>
<dbReference type="KEGG" id="mma:MM_3314"/>
<dbReference type="PATRIC" id="fig|192952.21.peg.3849"/>
<dbReference type="eggNOG" id="arCOG01983">
    <property type="taxonomic scope" value="Archaea"/>
</dbReference>
<dbReference type="HOGENOM" id="CLU_076364_2_0_2"/>
<dbReference type="UniPathway" id="UPA00035">
    <property type="reaction ID" value="UER00042"/>
</dbReference>
<dbReference type="Proteomes" id="UP000000595">
    <property type="component" value="Chromosome"/>
</dbReference>
<dbReference type="GO" id="GO:0004640">
    <property type="term" value="F:phosphoribosylanthranilate isomerase activity"/>
    <property type="evidence" value="ECO:0007669"/>
    <property type="project" value="UniProtKB-UniRule"/>
</dbReference>
<dbReference type="GO" id="GO:0000162">
    <property type="term" value="P:L-tryptophan biosynthetic process"/>
    <property type="evidence" value="ECO:0007669"/>
    <property type="project" value="UniProtKB-UniRule"/>
</dbReference>
<dbReference type="CDD" id="cd00405">
    <property type="entry name" value="PRAI"/>
    <property type="match status" value="1"/>
</dbReference>
<dbReference type="Gene3D" id="3.20.20.70">
    <property type="entry name" value="Aldolase class I"/>
    <property type="match status" value="1"/>
</dbReference>
<dbReference type="HAMAP" id="MF_00135">
    <property type="entry name" value="PRAI"/>
    <property type="match status" value="1"/>
</dbReference>
<dbReference type="InterPro" id="IPR013785">
    <property type="entry name" value="Aldolase_TIM"/>
</dbReference>
<dbReference type="InterPro" id="IPR001240">
    <property type="entry name" value="PRAI_dom"/>
</dbReference>
<dbReference type="InterPro" id="IPR011060">
    <property type="entry name" value="RibuloseP-bd_barrel"/>
</dbReference>
<dbReference type="InterPro" id="IPR044643">
    <property type="entry name" value="TrpF_fam"/>
</dbReference>
<dbReference type="PANTHER" id="PTHR42894">
    <property type="entry name" value="N-(5'-PHOSPHORIBOSYL)ANTHRANILATE ISOMERASE"/>
    <property type="match status" value="1"/>
</dbReference>
<dbReference type="PANTHER" id="PTHR42894:SF1">
    <property type="entry name" value="N-(5'-PHOSPHORIBOSYL)ANTHRANILATE ISOMERASE"/>
    <property type="match status" value="1"/>
</dbReference>
<dbReference type="Pfam" id="PF00697">
    <property type="entry name" value="PRAI"/>
    <property type="match status" value="1"/>
</dbReference>
<dbReference type="SUPFAM" id="SSF51366">
    <property type="entry name" value="Ribulose-phoshate binding barrel"/>
    <property type="match status" value="1"/>
</dbReference>
<sequence length="226" mass="24760">MRIKVCGIKRVEDAVMAAYCGADAIGLVVGRKHNSDDFIDKHLAQKIVRECPPYISPVLVTELDDAEEISGLVHETGVTSVQLHSDCTVDSIISLRKTFPNIKIIKNFHVIGPGVIHAMKPFESVVDAFILDTLDLANDKVGSTGLVHDWSISRKIVKEVSRPVILAGGLTPENVGEAIRVVNPYGVDASSGLKDSNGFKDEMKVINFVHRAKNDFFKVRNLSLEN</sequence>